<dbReference type="EC" id="3.6.-.-" evidence="1"/>
<dbReference type="EMBL" id="AP006861">
    <property type="protein sequence ID" value="BAE80858.1"/>
    <property type="molecule type" value="Genomic_DNA"/>
</dbReference>
<dbReference type="RefSeq" id="WP_011457643.1">
    <property type="nucleotide sequence ID" value="NC_007899.1"/>
</dbReference>
<dbReference type="SMR" id="Q256D0"/>
<dbReference type="STRING" id="264202.CF0086"/>
<dbReference type="KEGG" id="cfe:CF0086"/>
<dbReference type="eggNOG" id="COG0486">
    <property type="taxonomic scope" value="Bacteria"/>
</dbReference>
<dbReference type="HOGENOM" id="CLU_019624_4_1_0"/>
<dbReference type="OrthoDB" id="9805918at2"/>
<dbReference type="Proteomes" id="UP000001260">
    <property type="component" value="Chromosome"/>
</dbReference>
<dbReference type="GO" id="GO:0005829">
    <property type="term" value="C:cytosol"/>
    <property type="evidence" value="ECO:0007669"/>
    <property type="project" value="TreeGrafter"/>
</dbReference>
<dbReference type="GO" id="GO:0005525">
    <property type="term" value="F:GTP binding"/>
    <property type="evidence" value="ECO:0007669"/>
    <property type="project" value="UniProtKB-UniRule"/>
</dbReference>
<dbReference type="GO" id="GO:0003924">
    <property type="term" value="F:GTPase activity"/>
    <property type="evidence" value="ECO:0007669"/>
    <property type="project" value="UniProtKB-UniRule"/>
</dbReference>
<dbReference type="GO" id="GO:0046872">
    <property type="term" value="F:metal ion binding"/>
    <property type="evidence" value="ECO:0007669"/>
    <property type="project" value="UniProtKB-KW"/>
</dbReference>
<dbReference type="GO" id="GO:0030488">
    <property type="term" value="P:tRNA methylation"/>
    <property type="evidence" value="ECO:0007669"/>
    <property type="project" value="TreeGrafter"/>
</dbReference>
<dbReference type="GO" id="GO:0002098">
    <property type="term" value="P:tRNA wobble uridine modification"/>
    <property type="evidence" value="ECO:0007669"/>
    <property type="project" value="TreeGrafter"/>
</dbReference>
<dbReference type="CDD" id="cd04164">
    <property type="entry name" value="trmE"/>
    <property type="match status" value="1"/>
</dbReference>
<dbReference type="CDD" id="cd14858">
    <property type="entry name" value="TrmE_N"/>
    <property type="match status" value="1"/>
</dbReference>
<dbReference type="FunFam" id="3.30.1360.120:FF:000003">
    <property type="entry name" value="tRNA modification GTPase MnmE"/>
    <property type="match status" value="1"/>
</dbReference>
<dbReference type="FunFam" id="3.40.50.300:FF:001376">
    <property type="entry name" value="tRNA modification GTPase MnmE"/>
    <property type="match status" value="1"/>
</dbReference>
<dbReference type="Gene3D" id="3.40.50.300">
    <property type="entry name" value="P-loop containing nucleotide triphosphate hydrolases"/>
    <property type="match status" value="1"/>
</dbReference>
<dbReference type="Gene3D" id="3.30.1360.120">
    <property type="entry name" value="Probable tRNA modification gtpase trme, domain 1"/>
    <property type="match status" value="1"/>
</dbReference>
<dbReference type="Gene3D" id="1.20.120.430">
    <property type="entry name" value="tRNA modification GTPase MnmE domain 2"/>
    <property type="match status" value="1"/>
</dbReference>
<dbReference type="HAMAP" id="MF_00379">
    <property type="entry name" value="GTPase_MnmE"/>
    <property type="match status" value="1"/>
</dbReference>
<dbReference type="InterPro" id="IPR031168">
    <property type="entry name" value="G_TrmE"/>
</dbReference>
<dbReference type="InterPro" id="IPR006073">
    <property type="entry name" value="GTP-bd"/>
</dbReference>
<dbReference type="InterPro" id="IPR018948">
    <property type="entry name" value="GTP-bd_TrmE_N"/>
</dbReference>
<dbReference type="InterPro" id="IPR004520">
    <property type="entry name" value="GTPase_MnmE"/>
</dbReference>
<dbReference type="InterPro" id="IPR027368">
    <property type="entry name" value="MnmE_dom2"/>
</dbReference>
<dbReference type="InterPro" id="IPR025867">
    <property type="entry name" value="MnmE_helical"/>
</dbReference>
<dbReference type="InterPro" id="IPR027417">
    <property type="entry name" value="P-loop_NTPase"/>
</dbReference>
<dbReference type="InterPro" id="IPR005225">
    <property type="entry name" value="Small_GTP-bd"/>
</dbReference>
<dbReference type="InterPro" id="IPR027266">
    <property type="entry name" value="TrmE/GcvT_dom1"/>
</dbReference>
<dbReference type="NCBIfam" id="TIGR00450">
    <property type="entry name" value="mnmE_trmE_thdF"/>
    <property type="match status" value="1"/>
</dbReference>
<dbReference type="NCBIfam" id="TIGR00231">
    <property type="entry name" value="small_GTP"/>
    <property type="match status" value="1"/>
</dbReference>
<dbReference type="PANTHER" id="PTHR42714">
    <property type="entry name" value="TRNA MODIFICATION GTPASE GTPBP3"/>
    <property type="match status" value="1"/>
</dbReference>
<dbReference type="PANTHER" id="PTHR42714:SF2">
    <property type="entry name" value="TRNA MODIFICATION GTPASE GTPBP3, MITOCHONDRIAL"/>
    <property type="match status" value="1"/>
</dbReference>
<dbReference type="Pfam" id="PF01926">
    <property type="entry name" value="MMR_HSR1"/>
    <property type="match status" value="1"/>
</dbReference>
<dbReference type="Pfam" id="PF12631">
    <property type="entry name" value="MnmE_helical"/>
    <property type="match status" value="1"/>
</dbReference>
<dbReference type="Pfam" id="PF10396">
    <property type="entry name" value="TrmE_N"/>
    <property type="match status" value="1"/>
</dbReference>
<dbReference type="PRINTS" id="PR00326">
    <property type="entry name" value="GTP1OBG"/>
</dbReference>
<dbReference type="SUPFAM" id="SSF52540">
    <property type="entry name" value="P-loop containing nucleoside triphosphate hydrolases"/>
    <property type="match status" value="1"/>
</dbReference>
<dbReference type="PROSITE" id="PS51709">
    <property type="entry name" value="G_TRME"/>
    <property type="match status" value="1"/>
</dbReference>
<name>MNME_CHLFF</name>
<reference key="1">
    <citation type="journal article" date="2006" name="DNA Res.">
        <title>Genome sequence of the cat pathogen, Chlamydophila felis.</title>
        <authorList>
            <person name="Azuma Y."/>
            <person name="Hirakawa H."/>
            <person name="Yamashita A."/>
            <person name="Cai Y."/>
            <person name="Rahman M.A."/>
            <person name="Suzuki H."/>
            <person name="Mitaku S."/>
            <person name="Toh H."/>
            <person name="Goto S."/>
            <person name="Murakami T."/>
            <person name="Sugi K."/>
            <person name="Hayashi H."/>
            <person name="Fukushi H."/>
            <person name="Hattori M."/>
            <person name="Kuhara S."/>
            <person name="Shirai M."/>
        </authorList>
    </citation>
    <scope>NUCLEOTIDE SEQUENCE [LARGE SCALE GENOMIC DNA]</scope>
    <source>
        <strain>Fe/C-56</strain>
    </source>
</reference>
<keyword id="KW-0963">Cytoplasm</keyword>
<keyword id="KW-0342">GTP-binding</keyword>
<keyword id="KW-0378">Hydrolase</keyword>
<keyword id="KW-0460">Magnesium</keyword>
<keyword id="KW-0479">Metal-binding</keyword>
<keyword id="KW-0547">Nucleotide-binding</keyword>
<keyword id="KW-0630">Potassium</keyword>
<keyword id="KW-0819">tRNA processing</keyword>
<sequence length="443" mass="48528">MIKNDTIAAIATPPGEGSIAIVRVSGPEAIQITDKIFSGPVPSFASHTAHLGTASHHGRQIDQVLLLIMRAPRSFTGEDVVELQCHGGYFSCSQILEALVSEGARPALPGEFSQRAFLNGKIDLIQAEAIQNLIAADNLDAFHIAQNHFQGHFSQRVQKISSLIIESLAFIEVLADFPEEEQPDMEVPEKRLNEALVIIEDLISSFDEGQRLAQGTSIVLAGHPNAGKSSLLNALTNRNRAIVTDIPGTTRDILEESWTLQGKRIRLIDSAGQRETDNPVEQEGIERAISAMKQAEGILWVMDATQPPPPLPEILFQKPSLLLWNKSDLASPPRIDTSLPQLAISAKTGDGILELKQFIQKWIQKQQLGKNSKVFLVSARHHTILQQIRTYLLSAKEGLLSQLPPELVALELRQALQTTGNLSGSEINETILGEIFSRFCIGK</sequence>
<gene>
    <name evidence="1" type="primary">mnmE</name>
    <name evidence="1" type="synonym">trmE</name>
    <name type="ordered locus">CF0086</name>
</gene>
<accession>Q256D0</accession>
<evidence type="ECO:0000255" key="1">
    <source>
        <dbReference type="HAMAP-Rule" id="MF_00379"/>
    </source>
</evidence>
<feature type="chain" id="PRO_1000048815" description="tRNA modification GTPase MnmE">
    <location>
        <begin position="1"/>
        <end position="443"/>
    </location>
</feature>
<feature type="domain" description="TrmE-type G">
    <location>
        <begin position="215"/>
        <end position="364"/>
    </location>
</feature>
<feature type="binding site" evidence="1">
    <location>
        <position position="23"/>
    </location>
    <ligand>
        <name>(6S)-5-formyl-5,6,7,8-tetrahydrofolate</name>
        <dbReference type="ChEBI" id="CHEBI:57457"/>
    </ligand>
</feature>
<feature type="binding site" evidence="1">
    <location>
        <position position="82"/>
    </location>
    <ligand>
        <name>(6S)-5-formyl-5,6,7,8-tetrahydrofolate</name>
        <dbReference type="ChEBI" id="CHEBI:57457"/>
    </ligand>
</feature>
<feature type="binding site" evidence="1">
    <location>
        <position position="121"/>
    </location>
    <ligand>
        <name>(6S)-5-formyl-5,6,7,8-tetrahydrofolate</name>
        <dbReference type="ChEBI" id="CHEBI:57457"/>
    </ligand>
</feature>
<feature type="binding site" evidence="1">
    <location>
        <begin position="225"/>
        <end position="230"/>
    </location>
    <ligand>
        <name>GTP</name>
        <dbReference type="ChEBI" id="CHEBI:37565"/>
    </ligand>
</feature>
<feature type="binding site" evidence="1">
    <location>
        <position position="225"/>
    </location>
    <ligand>
        <name>K(+)</name>
        <dbReference type="ChEBI" id="CHEBI:29103"/>
    </ligand>
</feature>
<feature type="binding site" evidence="1">
    <location>
        <position position="229"/>
    </location>
    <ligand>
        <name>Mg(2+)</name>
        <dbReference type="ChEBI" id="CHEBI:18420"/>
    </ligand>
</feature>
<feature type="binding site" evidence="1">
    <location>
        <begin position="244"/>
        <end position="250"/>
    </location>
    <ligand>
        <name>GTP</name>
        <dbReference type="ChEBI" id="CHEBI:37565"/>
    </ligand>
</feature>
<feature type="binding site" evidence="1">
    <location>
        <position position="244"/>
    </location>
    <ligand>
        <name>K(+)</name>
        <dbReference type="ChEBI" id="CHEBI:29103"/>
    </ligand>
</feature>
<feature type="binding site" evidence="1">
    <location>
        <position position="246"/>
    </location>
    <ligand>
        <name>K(+)</name>
        <dbReference type="ChEBI" id="CHEBI:29103"/>
    </ligand>
</feature>
<feature type="binding site" evidence="1">
    <location>
        <position position="249"/>
    </location>
    <ligand>
        <name>K(+)</name>
        <dbReference type="ChEBI" id="CHEBI:29103"/>
    </ligand>
</feature>
<feature type="binding site" evidence="1">
    <location>
        <position position="250"/>
    </location>
    <ligand>
        <name>Mg(2+)</name>
        <dbReference type="ChEBI" id="CHEBI:18420"/>
    </ligand>
</feature>
<feature type="binding site" evidence="1">
    <location>
        <begin position="269"/>
        <end position="272"/>
    </location>
    <ligand>
        <name>GTP</name>
        <dbReference type="ChEBI" id="CHEBI:37565"/>
    </ligand>
</feature>
<feature type="binding site" evidence="1">
    <location>
        <position position="443"/>
    </location>
    <ligand>
        <name>(6S)-5-formyl-5,6,7,8-tetrahydrofolate</name>
        <dbReference type="ChEBI" id="CHEBI:57457"/>
    </ligand>
</feature>
<protein>
    <recommendedName>
        <fullName evidence="1">tRNA modification GTPase MnmE</fullName>
        <ecNumber evidence="1">3.6.-.-</ecNumber>
    </recommendedName>
</protein>
<organism>
    <name type="scientific">Chlamydia felis (strain Fe/C-56)</name>
    <name type="common">Chlamydophila felis</name>
    <dbReference type="NCBI Taxonomy" id="264202"/>
    <lineage>
        <taxon>Bacteria</taxon>
        <taxon>Pseudomonadati</taxon>
        <taxon>Chlamydiota</taxon>
        <taxon>Chlamydiia</taxon>
        <taxon>Chlamydiales</taxon>
        <taxon>Chlamydiaceae</taxon>
        <taxon>Chlamydia/Chlamydophila group</taxon>
        <taxon>Chlamydia</taxon>
    </lineage>
</organism>
<proteinExistence type="inferred from homology"/>
<comment type="function">
    <text evidence="1">Exhibits a very high intrinsic GTPase hydrolysis rate. Involved in the addition of a carboxymethylaminomethyl (cmnm) group at the wobble position (U34) of certain tRNAs, forming tRNA-cmnm(5)s(2)U34.</text>
</comment>
<comment type="cofactor">
    <cofactor evidence="1">
        <name>K(+)</name>
        <dbReference type="ChEBI" id="CHEBI:29103"/>
    </cofactor>
    <text evidence="1">Binds 1 potassium ion per subunit.</text>
</comment>
<comment type="subunit">
    <text evidence="1">Homodimer. Heterotetramer of two MnmE and two MnmG subunits.</text>
</comment>
<comment type="subcellular location">
    <subcellularLocation>
        <location evidence="1">Cytoplasm</location>
    </subcellularLocation>
</comment>
<comment type="similarity">
    <text evidence="1">Belongs to the TRAFAC class TrmE-Era-EngA-EngB-Septin-like GTPase superfamily. TrmE GTPase family.</text>
</comment>